<name>FUB6_FUSO4</name>
<reference key="1">
    <citation type="journal article" date="2010" name="Nature">
        <title>Comparative genomics reveals mobile pathogenicity chromosomes in Fusarium.</title>
        <authorList>
            <person name="Ma L.-J."/>
            <person name="van der Does H.C."/>
            <person name="Borkovich K.A."/>
            <person name="Coleman J.J."/>
            <person name="Daboussi M.-J."/>
            <person name="Di Pietro A."/>
            <person name="Dufresne M."/>
            <person name="Freitag M."/>
            <person name="Grabherr M."/>
            <person name="Henrissat B."/>
            <person name="Houterman P.M."/>
            <person name="Kang S."/>
            <person name="Shim W.-B."/>
            <person name="Woloshuk C."/>
            <person name="Xie X."/>
            <person name="Xu J.-R."/>
            <person name="Antoniw J."/>
            <person name="Baker S.E."/>
            <person name="Bluhm B.H."/>
            <person name="Breakspear A."/>
            <person name="Brown D.W."/>
            <person name="Butchko R.A.E."/>
            <person name="Chapman S."/>
            <person name="Coulson R."/>
            <person name="Coutinho P.M."/>
            <person name="Danchin E.G.J."/>
            <person name="Diener A."/>
            <person name="Gale L.R."/>
            <person name="Gardiner D.M."/>
            <person name="Goff S."/>
            <person name="Hammond-Kosack K.E."/>
            <person name="Hilburn K."/>
            <person name="Hua-Van A."/>
            <person name="Jonkers W."/>
            <person name="Kazan K."/>
            <person name="Kodira C.D."/>
            <person name="Koehrsen M."/>
            <person name="Kumar L."/>
            <person name="Lee Y.-H."/>
            <person name="Li L."/>
            <person name="Manners J.M."/>
            <person name="Miranda-Saavedra D."/>
            <person name="Mukherjee M."/>
            <person name="Park G."/>
            <person name="Park J."/>
            <person name="Park S.-Y."/>
            <person name="Proctor R.H."/>
            <person name="Regev A."/>
            <person name="Ruiz-Roldan M.C."/>
            <person name="Sain D."/>
            <person name="Sakthikumar S."/>
            <person name="Sykes S."/>
            <person name="Schwartz D.C."/>
            <person name="Turgeon B.G."/>
            <person name="Wapinski I."/>
            <person name="Yoder O."/>
            <person name="Young S."/>
            <person name="Zeng Q."/>
            <person name="Zhou S."/>
            <person name="Galagan J."/>
            <person name="Cuomo C.A."/>
            <person name="Kistler H.C."/>
            <person name="Rep M."/>
        </authorList>
    </citation>
    <scope>NUCLEOTIDE SEQUENCE [LARGE SCALE GENOMIC DNA]</scope>
    <source>
        <strain>4287 / CBS 123668 / FGSC 9935 / NRRL 34936</strain>
    </source>
</reference>
<reference key="2">
    <citation type="submission" date="2015-03" db="UniProtKB">
        <authorList>
            <consortium name="EnsemblFungi"/>
        </authorList>
    </citation>
    <scope>IDENTIFICATION</scope>
    <source>
        <strain>4287 / CBS 123668 / FGSC 9935 / NRRL 34936</strain>
    </source>
</reference>
<reference key="3">
    <citation type="journal article" date="2006" name="Planta">
        <title>Fusaric acid induces apoptosis in saffron root-tip cells: roles of caspase-like activity, cytochrome c, and H2O2.</title>
        <authorList>
            <person name="Samadi L."/>
            <person name="Shahsavan Behboodi B."/>
        </authorList>
    </citation>
    <scope>BIOTECHNOLOGY</scope>
</reference>
<reference key="4">
    <citation type="journal article" date="2008" name="J. Appl. Microbiol.">
        <title>Bikaverin and fusaric acid from Fusarium oxysporum show antioomycete activity against Phytophthora infestans.</title>
        <authorList>
            <person name="Son S.W."/>
            <person name="Kim H.Y."/>
            <person name="Choi G.J."/>
            <person name="Lim H.K."/>
            <person name="Jang K.S."/>
            <person name="Lee S.O."/>
            <person name="Lee S."/>
            <person name="Sung N.D."/>
            <person name="Kim J.C."/>
        </authorList>
    </citation>
    <scope>BIOTECHNOLOGY</scope>
</reference>
<reference key="5">
    <citation type="journal article" date="2011" name="Arch. Pharm. Res.">
        <title>Antimycobacterial activity of fusaric acid from a mangrove endophyte and its metal complexes.</title>
        <authorList>
            <person name="Pan J.H."/>
            <person name="Chen Y."/>
            <person name="Huang Y.H."/>
            <person name="Tao Y.W."/>
            <person name="Wang J."/>
            <person name="Li Y."/>
            <person name="Peng Y."/>
            <person name="Dong T."/>
            <person name="Lai X.M."/>
            <person name="Lin Y.C."/>
        </authorList>
    </citation>
    <scope>BIOTECHNOLOGY</scope>
</reference>
<reference key="6">
    <citation type="journal article" date="2011" name="Toxicon">
        <title>Phytotoxicity of fusaric acid and analogs to cotton.</title>
        <authorList>
            <person name="Stipanovic R.D."/>
            <person name="Puckhaber L.S."/>
            <person name="Liu J."/>
            <person name="Bell A.A."/>
        </authorList>
    </citation>
    <scope>BIOTECHNOLOGY</scope>
</reference>
<reference key="7">
    <citation type="journal article" date="2012" name="Planta Med.">
        <title>In vitro acanthamoebicidal activity of fusaric acid and dehydrofusaric acid from an endophytic fungus Fusarium sp. Tlau3.</title>
        <authorList>
            <person name="Boonman N."/>
            <person name="Prachya S."/>
            <person name="Boonmee A."/>
            <person name="Kittakoop P."/>
            <person name="Wiyakrutta S."/>
            <person name="Sriubolmas N."/>
            <person name="Warit S."/>
            <person name="Dharmkrong-At Chusattayanond A."/>
        </authorList>
    </citation>
    <scope>BIOTECHNOLOGY</scope>
</reference>
<reference key="8">
    <citation type="journal article" date="2013" name="Planta">
        <title>Fusaric acid induction of programmed cell death modulated through nitric oxide signalling in tobacco suspension cells.</title>
        <authorList>
            <person name="Jiao J."/>
            <person name="Zhou B."/>
            <person name="Zhu X."/>
            <person name="Gao Z."/>
            <person name="Liang Y."/>
        </authorList>
    </citation>
    <scope>BIOTECHNOLOGY</scope>
</reference>
<reference key="9">
    <citation type="journal article" date="2013" name="PLoS ONE">
        <title>Contamination of bananas with beauvericin and fusaric acid produced by Fusarium oxysporum f. sp. cubense.</title>
        <authorList>
            <person name="Li C."/>
            <person name="Zuo C."/>
            <person name="Deng G."/>
            <person name="Kuang R."/>
            <person name="Yang Q."/>
            <person name="Hu C."/>
            <person name="Sheng O."/>
            <person name="Zhang S."/>
            <person name="Ma L."/>
            <person name="Wei Y."/>
            <person name="Yang J."/>
            <person name="Liu S."/>
            <person name="Biswas M.K."/>
            <person name="Viljoen A."/>
            <person name="Yi G."/>
        </authorList>
    </citation>
    <scope>BIOTECHNOLOGY</scope>
</reference>
<reference key="10">
    <citation type="journal article" date="2015" name="Mol. Plant Microbe Interact.">
        <title>Identification of a 12-gene fusaric acid biosynthetic gene cluster in Fusarium species through comparative and functional genomics.</title>
        <authorList>
            <person name="Brown D.W."/>
            <person name="Lee S.H."/>
            <person name="Kim L.H."/>
            <person name="Ryu J.G."/>
            <person name="Lee S."/>
            <person name="Seo Y."/>
            <person name="Kim Y.H."/>
            <person name="Busman M."/>
            <person name="Yun S.H."/>
            <person name="Proctor R.H."/>
            <person name="Lee T."/>
        </authorList>
    </citation>
    <scope>FUNCTION</scope>
    <scope>DISRUPTION PHENOTYPE</scope>
    <scope>CATALYTIC ACTIVITY</scope>
</reference>
<gene>
    <name evidence="11" type="primary">FUB6</name>
    <name type="ORF">FOXG_15241</name>
</gene>
<protein>
    <recommendedName>
        <fullName evidence="11">Dehydrogenase FUB6</fullName>
        <ecNumber evidence="13">1.-.-.-</ecNumber>
    </recommendedName>
    <alternativeName>
        <fullName evidence="11">Fusaric acid biosynthesis protein 6</fullName>
    </alternativeName>
</protein>
<proteinExistence type="evidence at protein level"/>
<comment type="function">
    <text evidence="1 10">Dehydrogenase; part of the gene cluster that mediates the biosynthesis of fusaric acid, a mycotoxin with low to moderate toxicity to animals and humans, but with high phytotoxic properties (PubMed:25372119). L-aspartate is suggested as fusaric acid amino acid precursor that is activated and further processed to O-acetyl-L-homoserine by cluster enzymes aspartate kinase FUB3 and homoserine O-acetyltransferase FUB5, as well as enzymes of the primary metabolism (By similarity). The polyketide synthase (PKS) FUB1 generates the triketide trans-2-hexenal which is presumptively released by the hydrolase FUB4 and linked to the NRPS-bound amino acid precursor by NAD(P)-dependent dehydrogenase FUB6 (By similarity). FUB1, FUB4, and the non-canonical NRPS Fub8 may form an enzyme complex (By similarity). Further processing of the NRPS-bound intermediate might be carried out by FUB6 and the O-acetylhomoserine FUB7, enabling a spontaneous electrocyclization to close the carbon backbone of fusaric acid (By similarity). Dihydrofusaric acid is likely to be released via reduction by the thioester reductase (TR) domain of FUB8 whereupon the final oxidation to fusaric acid may (also) be performed by the FMN-dependent dehydrogenase FUB9 (By similarity).</text>
</comment>
<comment type="pathway">
    <text evidence="10">Mycotoxin biosynthesis.</text>
</comment>
<comment type="disruption phenotype">
    <text evidence="10">Impairs the production of fusaric acid (PubMed:25372119).</text>
</comment>
<comment type="biotechnology">
    <text evidence="3 4 5 6 7 8 9">Fusaric acid is phytotoxic to plants such as cotton and banana (PubMed:20955724, PubMed:23922960). It has been shown to induce programmed cell death in plants (PubMed:16868776, PubMed:23838885). In addition to a mild toxicity to animals, fusaric acid exhibits acanthamoebicidal, antioomycete, and antimycobacterial activities (PubMed:17927749, PubMed:21811925, PubMed:22864988).</text>
</comment>
<comment type="similarity">
    <text evidence="12">Belongs to the zinc-containing alcohol dehydrogenase family. Quinone oxidoreductase subfamily.</text>
</comment>
<organism>
    <name type="scientific">Fusarium oxysporum f. sp. lycopersici (strain 4287 / CBS 123668 / FGSC 9935 / NRRL 34936)</name>
    <name type="common">Fusarium vascular wilt of tomato</name>
    <dbReference type="NCBI Taxonomy" id="426428"/>
    <lineage>
        <taxon>Eukaryota</taxon>
        <taxon>Fungi</taxon>
        <taxon>Dikarya</taxon>
        <taxon>Ascomycota</taxon>
        <taxon>Pezizomycotina</taxon>
        <taxon>Sordariomycetes</taxon>
        <taxon>Hypocreomycetidae</taxon>
        <taxon>Hypocreales</taxon>
        <taxon>Nectriaceae</taxon>
        <taxon>Fusarium</taxon>
        <taxon>Fusarium oxysporum species complex</taxon>
    </lineage>
</organism>
<accession>A0A0D2YG03</accession>
<sequence length="357" mass="39132">MGGEVSNKTWVFKQSPSGLPEPGVHTAFEDRPLSLVAPPGGLVINLLTAGLDPHQRDRMRGAGNVDYVPGYEVNEPITNFSIAKVIRSDNAAFEEGSLIAGSLPIAEYGIIPKELIDARAMASPLVWKVSNDYNLDVKHYVGTLGLAGMTAWNSFYGLVKPVKGETIWVNAASSSVGEVVVQLAKIEGMKVIASVSSDDKLDYVVNELGADVGFNYRKEPVGKALKRLAPDGLDVVFENVGGDHFQAAIENMKWFGRIISCGTASQYNKPVEEQYGVTNLSEIFRRRIKIQGFIFWDDNIYTDNIENFKATMPKWVSEGKIKSRYTQFEGIEQADKAFLSMFTGGSHGKTVLKISDP</sequence>
<dbReference type="EC" id="1.-.-.-" evidence="13"/>
<dbReference type="EMBL" id="DS231721">
    <property type="protein sequence ID" value="KNB17114.1"/>
    <property type="molecule type" value="Genomic_DNA"/>
</dbReference>
<dbReference type="RefSeq" id="XP_018255159.1">
    <property type="nucleotide sequence ID" value="XM_018395326.1"/>
</dbReference>
<dbReference type="SMR" id="A0A0D2YG03"/>
<dbReference type="STRING" id="426428.A0A0D2YG03"/>
<dbReference type="EnsemblFungi" id="FOXG_15241T0">
    <property type="protein sequence ID" value="FOXG_15241P0"/>
    <property type="gene ID" value="FOXG_15241"/>
</dbReference>
<dbReference type="GeneID" id="28956317"/>
<dbReference type="KEGG" id="fox:FOXG_15241"/>
<dbReference type="VEuPathDB" id="FungiDB:FOXG_15241"/>
<dbReference type="OMA" id="CGTASQY"/>
<dbReference type="OrthoDB" id="32899at110618"/>
<dbReference type="Proteomes" id="UP000009097">
    <property type="component" value="Unassembled WGS sequence"/>
</dbReference>
<dbReference type="GO" id="GO:0016628">
    <property type="term" value="F:oxidoreductase activity, acting on the CH-CH group of donors, NAD or NADP as acceptor"/>
    <property type="evidence" value="ECO:0007669"/>
    <property type="project" value="InterPro"/>
</dbReference>
<dbReference type="CDD" id="cd05288">
    <property type="entry name" value="PGDH"/>
    <property type="match status" value="1"/>
</dbReference>
<dbReference type="FunFam" id="3.40.50.720:FF:000121">
    <property type="entry name" value="Prostaglandin reductase 2"/>
    <property type="match status" value="1"/>
</dbReference>
<dbReference type="Gene3D" id="3.90.180.10">
    <property type="entry name" value="Medium-chain alcohol dehydrogenases, catalytic domain"/>
    <property type="match status" value="1"/>
</dbReference>
<dbReference type="Gene3D" id="3.40.50.720">
    <property type="entry name" value="NAD(P)-binding Rossmann-like Domain"/>
    <property type="match status" value="1"/>
</dbReference>
<dbReference type="InterPro" id="IPR013149">
    <property type="entry name" value="ADH-like_C"/>
</dbReference>
<dbReference type="InterPro" id="IPR041694">
    <property type="entry name" value="ADH_N_2"/>
</dbReference>
<dbReference type="InterPro" id="IPR011032">
    <property type="entry name" value="GroES-like_sf"/>
</dbReference>
<dbReference type="InterPro" id="IPR045010">
    <property type="entry name" value="MDR_fam"/>
</dbReference>
<dbReference type="InterPro" id="IPR036291">
    <property type="entry name" value="NAD(P)-bd_dom_sf"/>
</dbReference>
<dbReference type="InterPro" id="IPR020843">
    <property type="entry name" value="PKS_ER"/>
</dbReference>
<dbReference type="PANTHER" id="PTHR43205">
    <property type="entry name" value="PROSTAGLANDIN REDUCTASE"/>
    <property type="match status" value="1"/>
</dbReference>
<dbReference type="PANTHER" id="PTHR43205:SF7">
    <property type="entry name" value="PROSTAGLANDIN REDUCTASE 1"/>
    <property type="match status" value="1"/>
</dbReference>
<dbReference type="Pfam" id="PF16884">
    <property type="entry name" value="ADH_N_2"/>
    <property type="match status" value="1"/>
</dbReference>
<dbReference type="Pfam" id="PF00107">
    <property type="entry name" value="ADH_zinc_N"/>
    <property type="match status" value="1"/>
</dbReference>
<dbReference type="SMART" id="SM00829">
    <property type="entry name" value="PKS_ER"/>
    <property type="match status" value="1"/>
</dbReference>
<dbReference type="SUPFAM" id="SSF50129">
    <property type="entry name" value="GroES-like"/>
    <property type="match status" value="1"/>
</dbReference>
<dbReference type="SUPFAM" id="SSF51735">
    <property type="entry name" value="NAD(P)-binding Rossmann-fold domains"/>
    <property type="match status" value="1"/>
</dbReference>
<feature type="chain" id="PRO_0000437335" description="Dehydrogenase FUB6">
    <location>
        <begin position="1"/>
        <end position="357"/>
    </location>
</feature>
<feature type="region of interest" description="Disordered" evidence="2">
    <location>
        <begin position="1"/>
        <end position="22"/>
    </location>
</feature>
<feature type="compositionally biased region" description="Polar residues" evidence="2">
    <location>
        <begin position="1"/>
        <end position="17"/>
    </location>
</feature>
<evidence type="ECO:0000250" key="1">
    <source>
        <dbReference type="UniProtKB" id="S0DRW9"/>
    </source>
</evidence>
<evidence type="ECO:0000256" key="2">
    <source>
        <dbReference type="SAM" id="MobiDB-lite"/>
    </source>
</evidence>
<evidence type="ECO:0000269" key="3">
    <source>
    </source>
</evidence>
<evidence type="ECO:0000269" key="4">
    <source>
    </source>
</evidence>
<evidence type="ECO:0000269" key="5">
    <source>
    </source>
</evidence>
<evidence type="ECO:0000269" key="6">
    <source>
    </source>
</evidence>
<evidence type="ECO:0000269" key="7">
    <source>
    </source>
</evidence>
<evidence type="ECO:0000269" key="8">
    <source>
    </source>
</evidence>
<evidence type="ECO:0000269" key="9">
    <source>
    </source>
</evidence>
<evidence type="ECO:0000269" key="10">
    <source>
    </source>
</evidence>
<evidence type="ECO:0000303" key="11">
    <source>
    </source>
</evidence>
<evidence type="ECO:0000305" key="12"/>
<evidence type="ECO:0000305" key="13">
    <source>
    </source>
</evidence>
<keyword id="KW-0560">Oxidoreductase</keyword>
<keyword id="KW-1185">Reference proteome</keyword>